<accession>Q5L3V8</accession>
<comment type="function">
    <text evidence="1">Specifically dimethylates two adjacent adenosines (A1518 and A1519) in the loop of a conserved hairpin near the 3'-end of 16S rRNA in the 30S particle. May play a critical role in biogenesis of 30S subunits.</text>
</comment>
<comment type="catalytic activity">
    <reaction evidence="1">
        <text>adenosine(1518)/adenosine(1519) in 16S rRNA + 4 S-adenosyl-L-methionine = N(6)-dimethyladenosine(1518)/N(6)-dimethyladenosine(1519) in 16S rRNA + 4 S-adenosyl-L-homocysteine + 4 H(+)</text>
        <dbReference type="Rhea" id="RHEA:19609"/>
        <dbReference type="Rhea" id="RHEA-COMP:10232"/>
        <dbReference type="Rhea" id="RHEA-COMP:10233"/>
        <dbReference type="ChEBI" id="CHEBI:15378"/>
        <dbReference type="ChEBI" id="CHEBI:57856"/>
        <dbReference type="ChEBI" id="CHEBI:59789"/>
        <dbReference type="ChEBI" id="CHEBI:74411"/>
        <dbReference type="ChEBI" id="CHEBI:74493"/>
        <dbReference type="EC" id="2.1.1.182"/>
    </reaction>
</comment>
<comment type="subcellular location">
    <subcellularLocation>
        <location evidence="1">Cytoplasm</location>
    </subcellularLocation>
</comment>
<comment type="similarity">
    <text evidence="1">Belongs to the class I-like SAM-binding methyltransferase superfamily. rRNA adenine N(6)-methyltransferase family. RsmA subfamily.</text>
</comment>
<gene>
    <name evidence="1" type="primary">rsmA</name>
    <name evidence="1" type="synonym">ksgA</name>
    <name type="ordered locus">GK0035</name>
</gene>
<dbReference type="EC" id="2.1.1.182" evidence="1"/>
<dbReference type="EMBL" id="BA000043">
    <property type="protein sequence ID" value="BAD74320.1"/>
    <property type="molecule type" value="Genomic_DNA"/>
</dbReference>
<dbReference type="RefSeq" id="WP_011229551.1">
    <property type="nucleotide sequence ID" value="NC_006510.1"/>
</dbReference>
<dbReference type="SMR" id="Q5L3V8"/>
<dbReference type="STRING" id="235909.GK0035"/>
<dbReference type="KEGG" id="gka:GK0035"/>
<dbReference type="eggNOG" id="COG0030">
    <property type="taxonomic scope" value="Bacteria"/>
</dbReference>
<dbReference type="HOGENOM" id="CLU_041220_0_0_9"/>
<dbReference type="Proteomes" id="UP000001172">
    <property type="component" value="Chromosome"/>
</dbReference>
<dbReference type="GO" id="GO:0005829">
    <property type="term" value="C:cytosol"/>
    <property type="evidence" value="ECO:0007669"/>
    <property type="project" value="TreeGrafter"/>
</dbReference>
<dbReference type="GO" id="GO:0052908">
    <property type="term" value="F:16S rRNA (adenine(1518)-N(6)/adenine(1519)-N(6))-dimethyltransferase activity"/>
    <property type="evidence" value="ECO:0007669"/>
    <property type="project" value="UniProtKB-EC"/>
</dbReference>
<dbReference type="GO" id="GO:0003723">
    <property type="term" value="F:RNA binding"/>
    <property type="evidence" value="ECO:0007669"/>
    <property type="project" value="UniProtKB-KW"/>
</dbReference>
<dbReference type="CDD" id="cd02440">
    <property type="entry name" value="AdoMet_MTases"/>
    <property type="match status" value="1"/>
</dbReference>
<dbReference type="FunFam" id="1.10.8.100:FF:000002">
    <property type="entry name" value="Ribosomal RNA small subunit methyltransferase A"/>
    <property type="match status" value="1"/>
</dbReference>
<dbReference type="FunFam" id="3.40.50.150:FF:000023">
    <property type="entry name" value="Ribosomal RNA small subunit methyltransferase A"/>
    <property type="match status" value="1"/>
</dbReference>
<dbReference type="Gene3D" id="1.10.8.100">
    <property type="entry name" value="Ribosomal RNA adenine dimethylase-like, domain 2"/>
    <property type="match status" value="1"/>
</dbReference>
<dbReference type="Gene3D" id="3.40.50.150">
    <property type="entry name" value="Vaccinia Virus protein VP39"/>
    <property type="match status" value="1"/>
</dbReference>
<dbReference type="HAMAP" id="MF_00607">
    <property type="entry name" value="16SrRNA_methyltr_A"/>
    <property type="match status" value="1"/>
</dbReference>
<dbReference type="InterPro" id="IPR001737">
    <property type="entry name" value="KsgA/Erm"/>
</dbReference>
<dbReference type="InterPro" id="IPR023165">
    <property type="entry name" value="rRNA_Ade_diMease-like_C"/>
</dbReference>
<dbReference type="InterPro" id="IPR020596">
    <property type="entry name" value="rRNA_Ade_Mease_Trfase_CS"/>
</dbReference>
<dbReference type="InterPro" id="IPR020598">
    <property type="entry name" value="rRNA_Ade_methylase_Trfase_N"/>
</dbReference>
<dbReference type="InterPro" id="IPR011530">
    <property type="entry name" value="rRNA_adenine_dimethylase"/>
</dbReference>
<dbReference type="InterPro" id="IPR029063">
    <property type="entry name" value="SAM-dependent_MTases_sf"/>
</dbReference>
<dbReference type="NCBIfam" id="TIGR00755">
    <property type="entry name" value="ksgA"/>
    <property type="match status" value="1"/>
</dbReference>
<dbReference type="PANTHER" id="PTHR11727">
    <property type="entry name" value="DIMETHYLADENOSINE TRANSFERASE"/>
    <property type="match status" value="1"/>
</dbReference>
<dbReference type="PANTHER" id="PTHR11727:SF7">
    <property type="entry name" value="DIMETHYLADENOSINE TRANSFERASE-RELATED"/>
    <property type="match status" value="1"/>
</dbReference>
<dbReference type="Pfam" id="PF00398">
    <property type="entry name" value="RrnaAD"/>
    <property type="match status" value="1"/>
</dbReference>
<dbReference type="SMART" id="SM00650">
    <property type="entry name" value="rADc"/>
    <property type="match status" value="1"/>
</dbReference>
<dbReference type="SUPFAM" id="SSF53335">
    <property type="entry name" value="S-adenosyl-L-methionine-dependent methyltransferases"/>
    <property type="match status" value="1"/>
</dbReference>
<dbReference type="PROSITE" id="PS01131">
    <property type="entry name" value="RRNA_A_DIMETH"/>
    <property type="match status" value="1"/>
</dbReference>
<dbReference type="PROSITE" id="PS51689">
    <property type="entry name" value="SAM_RNA_A_N6_MT"/>
    <property type="match status" value="1"/>
</dbReference>
<protein>
    <recommendedName>
        <fullName evidence="1">Ribosomal RNA small subunit methyltransferase A</fullName>
        <ecNumber evidence="1">2.1.1.182</ecNumber>
    </recommendedName>
    <alternativeName>
        <fullName evidence="1">16S rRNA (adenine(1518)-N(6)/adenine(1519)-N(6))-dimethyltransferase</fullName>
    </alternativeName>
    <alternativeName>
        <fullName evidence="1">16S rRNA dimethyladenosine transferase</fullName>
    </alternativeName>
    <alternativeName>
        <fullName evidence="1">16S rRNA dimethylase</fullName>
    </alternativeName>
    <alternativeName>
        <fullName evidence="1">S-adenosylmethionine-6-N', N'-adenosyl(rRNA) dimethyltransferase</fullName>
    </alternativeName>
</protein>
<reference key="1">
    <citation type="journal article" date="2004" name="Nucleic Acids Res.">
        <title>Thermoadaptation trait revealed by the genome sequence of thermophilic Geobacillus kaustophilus.</title>
        <authorList>
            <person name="Takami H."/>
            <person name="Takaki Y."/>
            <person name="Chee G.-J."/>
            <person name="Nishi S."/>
            <person name="Shimamura S."/>
            <person name="Suzuki H."/>
            <person name="Matsui S."/>
            <person name="Uchiyama I."/>
        </authorList>
    </citation>
    <scope>NUCLEOTIDE SEQUENCE [LARGE SCALE GENOMIC DNA]</scope>
    <source>
        <strain>HTA426</strain>
    </source>
</reference>
<feature type="chain" id="PRO_0000101533" description="Ribosomal RNA small subunit methyltransferase A">
    <location>
        <begin position="1"/>
        <end position="293"/>
    </location>
</feature>
<feature type="binding site" evidence="1">
    <location>
        <position position="29"/>
    </location>
    <ligand>
        <name>S-adenosyl-L-methionine</name>
        <dbReference type="ChEBI" id="CHEBI:59789"/>
    </ligand>
</feature>
<feature type="binding site" evidence="1">
    <location>
        <position position="31"/>
    </location>
    <ligand>
        <name>S-adenosyl-L-methionine</name>
        <dbReference type="ChEBI" id="CHEBI:59789"/>
    </ligand>
</feature>
<feature type="binding site" evidence="1">
    <location>
        <position position="56"/>
    </location>
    <ligand>
        <name>S-adenosyl-L-methionine</name>
        <dbReference type="ChEBI" id="CHEBI:59789"/>
    </ligand>
</feature>
<feature type="binding site" evidence="1">
    <location>
        <position position="77"/>
    </location>
    <ligand>
        <name>S-adenosyl-L-methionine</name>
        <dbReference type="ChEBI" id="CHEBI:59789"/>
    </ligand>
</feature>
<feature type="binding site" evidence="1">
    <location>
        <position position="102"/>
    </location>
    <ligand>
        <name>S-adenosyl-L-methionine</name>
        <dbReference type="ChEBI" id="CHEBI:59789"/>
    </ligand>
</feature>
<feature type="binding site" evidence="1">
    <location>
        <position position="127"/>
    </location>
    <ligand>
        <name>S-adenosyl-L-methionine</name>
        <dbReference type="ChEBI" id="CHEBI:59789"/>
    </ligand>
</feature>
<name>RSMA_GEOKA</name>
<evidence type="ECO:0000255" key="1">
    <source>
        <dbReference type="HAMAP-Rule" id="MF_00607"/>
    </source>
</evidence>
<organism>
    <name type="scientific">Geobacillus kaustophilus (strain HTA426)</name>
    <dbReference type="NCBI Taxonomy" id="235909"/>
    <lineage>
        <taxon>Bacteria</taxon>
        <taxon>Bacillati</taxon>
        <taxon>Bacillota</taxon>
        <taxon>Bacilli</taxon>
        <taxon>Bacillales</taxon>
        <taxon>Anoxybacillaceae</taxon>
        <taxon>Geobacillus</taxon>
        <taxon>Geobacillus thermoleovorans group</taxon>
    </lineage>
</organism>
<keyword id="KW-0963">Cytoplasm</keyword>
<keyword id="KW-0489">Methyltransferase</keyword>
<keyword id="KW-1185">Reference proteome</keyword>
<keyword id="KW-0694">RNA-binding</keyword>
<keyword id="KW-0698">rRNA processing</keyword>
<keyword id="KW-0949">S-adenosyl-L-methionine</keyword>
<keyword id="KW-0808">Transferase</keyword>
<proteinExistence type="inferred from homology"/>
<sequence>MYKDIATPGRTKEILERYGFSFKKSLGQNFLIDANILRKIVDVADISPDTGAIEIGPGIGALTEQLARRAKKVVAFEIDGRLLPILADTLSPYDNVRIFHQDVLKADLHAVIAEELADVSDRMVVANLPYYVTTPIIMKLLTERLPIRGMVVMLQKEVADRLAAKPGTKDYGSLTIAVQYYTEAEVIMTVPRTVFMPQPNVDSAVIRLVKRQHPPVVVDDEGVFFQVVRASFAQRRKTLFNNLTNNLPGGKENKEQIERVLVALGIDPRRRGETLDIAEFASLSNALAPLFGK</sequence>